<dbReference type="EC" id="3.1.4.14" evidence="1"/>
<dbReference type="EMBL" id="CU928161">
    <property type="protein sequence ID" value="CAR01747.1"/>
    <property type="molecule type" value="Genomic_DNA"/>
</dbReference>
<dbReference type="RefSeq" id="WP_001009870.1">
    <property type="nucleotide sequence ID" value="NC_011742.1"/>
</dbReference>
<dbReference type="SMR" id="B7MD62"/>
<dbReference type="KEGG" id="ecz:ECS88_0399"/>
<dbReference type="HOGENOM" id="CLU_099370_1_0_6"/>
<dbReference type="Proteomes" id="UP000000747">
    <property type="component" value="Chromosome"/>
</dbReference>
<dbReference type="GO" id="GO:0008770">
    <property type="term" value="F:[acyl-carrier-protein] phosphodiesterase activity"/>
    <property type="evidence" value="ECO:0007669"/>
    <property type="project" value="UniProtKB-UniRule"/>
</dbReference>
<dbReference type="GO" id="GO:0006633">
    <property type="term" value="P:fatty acid biosynthetic process"/>
    <property type="evidence" value="ECO:0007669"/>
    <property type="project" value="UniProtKB-UniRule"/>
</dbReference>
<dbReference type="HAMAP" id="MF_01950">
    <property type="entry name" value="AcpH"/>
    <property type="match status" value="1"/>
</dbReference>
<dbReference type="InterPro" id="IPR007431">
    <property type="entry name" value="ACP_PD"/>
</dbReference>
<dbReference type="InterPro" id="IPR023491">
    <property type="entry name" value="ACP_phosphodiesterase_gpbac"/>
</dbReference>
<dbReference type="NCBIfam" id="NF007466">
    <property type="entry name" value="PRK10045.1"/>
    <property type="match status" value="1"/>
</dbReference>
<dbReference type="PANTHER" id="PTHR38764">
    <property type="entry name" value="ACYL CARRIER PROTEIN PHOSPHODIESTERASE"/>
    <property type="match status" value="1"/>
</dbReference>
<dbReference type="PANTHER" id="PTHR38764:SF1">
    <property type="entry name" value="ACYL CARRIER PROTEIN PHOSPHODIESTERASE"/>
    <property type="match status" value="1"/>
</dbReference>
<dbReference type="Pfam" id="PF04336">
    <property type="entry name" value="ACP_PD"/>
    <property type="match status" value="1"/>
</dbReference>
<dbReference type="PIRSF" id="PIRSF011489">
    <property type="entry name" value="DUF479"/>
    <property type="match status" value="1"/>
</dbReference>
<organism>
    <name type="scientific">Escherichia coli O45:K1 (strain S88 / ExPEC)</name>
    <dbReference type="NCBI Taxonomy" id="585035"/>
    <lineage>
        <taxon>Bacteria</taxon>
        <taxon>Pseudomonadati</taxon>
        <taxon>Pseudomonadota</taxon>
        <taxon>Gammaproteobacteria</taxon>
        <taxon>Enterobacterales</taxon>
        <taxon>Enterobacteriaceae</taxon>
        <taxon>Escherichia</taxon>
    </lineage>
</organism>
<keyword id="KW-0275">Fatty acid biosynthesis</keyword>
<keyword id="KW-0276">Fatty acid metabolism</keyword>
<keyword id="KW-0378">Hydrolase</keyword>
<keyword id="KW-0444">Lipid biosynthesis</keyword>
<keyword id="KW-0443">Lipid metabolism</keyword>
<keyword id="KW-1185">Reference proteome</keyword>
<proteinExistence type="inferred from homology"/>
<gene>
    <name evidence="1" type="primary">acpH</name>
    <name type="ordered locus">ECS88_0399</name>
</gene>
<name>ACPH_ECO45</name>
<protein>
    <recommendedName>
        <fullName evidence="1">Acyl carrier protein phosphodiesterase</fullName>
        <shortName evidence="1">ACP phosphodiesterase</shortName>
        <ecNumber evidence="1">3.1.4.14</ecNumber>
    </recommendedName>
</protein>
<sequence length="193" mass="23021">MNFLAHLHLAHLAESSLSGNLLADFVRGNPEESFPPDVVAGIHMHRRIDVLTDNLPEVREAREWFRNETRRVAPITLDVMWDHFLSRHWSQLSPDFPLQEFTCYAREQVMTILPDSPPRFINLNNYLWSEQWLVRYRDMDFIQSVLNGMASRRPRLDALRDSWYDLDAHYDALETRFWQFYPRMMEQASRKAL</sequence>
<feature type="chain" id="PRO_1000188798" description="Acyl carrier protein phosphodiesterase">
    <location>
        <begin position="1"/>
        <end position="193"/>
    </location>
</feature>
<evidence type="ECO:0000255" key="1">
    <source>
        <dbReference type="HAMAP-Rule" id="MF_01950"/>
    </source>
</evidence>
<accession>B7MD62</accession>
<comment type="function">
    <text evidence="1">Converts holo-ACP to apo-ACP by hydrolytic cleavage of the phosphopantetheine prosthetic group from ACP.</text>
</comment>
<comment type="catalytic activity">
    <reaction evidence="1">
        <text>holo-[ACP] + H2O = apo-[ACP] + (R)-4'-phosphopantetheine + H(+)</text>
        <dbReference type="Rhea" id="RHEA:20537"/>
        <dbReference type="Rhea" id="RHEA-COMP:9685"/>
        <dbReference type="Rhea" id="RHEA-COMP:9690"/>
        <dbReference type="ChEBI" id="CHEBI:15377"/>
        <dbReference type="ChEBI" id="CHEBI:15378"/>
        <dbReference type="ChEBI" id="CHEBI:29999"/>
        <dbReference type="ChEBI" id="CHEBI:61723"/>
        <dbReference type="ChEBI" id="CHEBI:64479"/>
        <dbReference type="EC" id="3.1.4.14"/>
    </reaction>
</comment>
<comment type="similarity">
    <text evidence="1">Belongs to the AcpH family.</text>
</comment>
<reference key="1">
    <citation type="journal article" date="2009" name="PLoS Genet.">
        <title>Organised genome dynamics in the Escherichia coli species results in highly diverse adaptive paths.</title>
        <authorList>
            <person name="Touchon M."/>
            <person name="Hoede C."/>
            <person name="Tenaillon O."/>
            <person name="Barbe V."/>
            <person name="Baeriswyl S."/>
            <person name="Bidet P."/>
            <person name="Bingen E."/>
            <person name="Bonacorsi S."/>
            <person name="Bouchier C."/>
            <person name="Bouvet O."/>
            <person name="Calteau A."/>
            <person name="Chiapello H."/>
            <person name="Clermont O."/>
            <person name="Cruveiller S."/>
            <person name="Danchin A."/>
            <person name="Diard M."/>
            <person name="Dossat C."/>
            <person name="Karoui M.E."/>
            <person name="Frapy E."/>
            <person name="Garry L."/>
            <person name="Ghigo J.M."/>
            <person name="Gilles A.M."/>
            <person name="Johnson J."/>
            <person name="Le Bouguenec C."/>
            <person name="Lescat M."/>
            <person name="Mangenot S."/>
            <person name="Martinez-Jehanne V."/>
            <person name="Matic I."/>
            <person name="Nassif X."/>
            <person name="Oztas S."/>
            <person name="Petit M.A."/>
            <person name="Pichon C."/>
            <person name="Rouy Z."/>
            <person name="Ruf C.S."/>
            <person name="Schneider D."/>
            <person name="Tourret J."/>
            <person name="Vacherie B."/>
            <person name="Vallenet D."/>
            <person name="Medigue C."/>
            <person name="Rocha E.P.C."/>
            <person name="Denamur E."/>
        </authorList>
    </citation>
    <scope>NUCLEOTIDE SEQUENCE [LARGE SCALE GENOMIC DNA]</scope>
    <source>
        <strain>S88 / ExPEC</strain>
    </source>
</reference>